<reference key="1">
    <citation type="journal article" date="2009" name="J. Bacteriol.">
        <title>Genome sequence of Azotobacter vinelandii, an obligate aerobe specialized to support diverse anaerobic metabolic processes.</title>
        <authorList>
            <person name="Setubal J.C."/>
            <person name="Dos Santos P."/>
            <person name="Goldman B.S."/>
            <person name="Ertesvaag H."/>
            <person name="Espin G."/>
            <person name="Rubio L.M."/>
            <person name="Valla S."/>
            <person name="Almeida N.F."/>
            <person name="Balasubramanian D."/>
            <person name="Cromes L."/>
            <person name="Curatti L."/>
            <person name="Du Z."/>
            <person name="Godsy E."/>
            <person name="Goodner B."/>
            <person name="Hellner-Burris K."/>
            <person name="Hernandez J.A."/>
            <person name="Houmiel K."/>
            <person name="Imperial J."/>
            <person name="Kennedy C."/>
            <person name="Larson T.J."/>
            <person name="Latreille P."/>
            <person name="Ligon L.S."/>
            <person name="Lu J."/>
            <person name="Maerk M."/>
            <person name="Miller N.M."/>
            <person name="Norton S."/>
            <person name="O'Carroll I.P."/>
            <person name="Paulsen I."/>
            <person name="Raulfs E.C."/>
            <person name="Roemer R."/>
            <person name="Rosser J."/>
            <person name="Segura D."/>
            <person name="Slater S."/>
            <person name="Stricklin S.L."/>
            <person name="Studholme D.J."/>
            <person name="Sun J."/>
            <person name="Viana C.J."/>
            <person name="Wallin E."/>
            <person name="Wang B."/>
            <person name="Wheeler C."/>
            <person name="Zhu H."/>
            <person name="Dean D.R."/>
            <person name="Dixon R."/>
            <person name="Wood D."/>
        </authorList>
    </citation>
    <scope>NUCLEOTIDE SEQUENCE [LARGE SCALE GENOMIC DNA]</scope>
    <source>
        <strain>DJ / ATCC BAA-1303</strain>
    </source>
</reference>
<gene>
    <name type="ordered locus">Avin_13410</name>
</gene>
<organism>
    <name type="scientific">Azotobacter vinelandii (strain DJ / ATCC BAA-1303)</name>
    <dbReference type="NCBI Taxonomy" id="322710"/>
    <lineage>
        <taxon>Bacteria</taxon>
        <taxon>Pseudomonadati</taxon>
        <taxon>Pseudomonadota</taxon>
        <taxon>Gammaproteobacteria</taxon>
        <taxon>Pseudomonadales</taxon>
        <taxon>Pseudomonadaceae</taxon>
        <taxon>Azotobacter</taxon>
    </lineage>
</organism>
<name>Y1341_AZOVD</name>
<feature type="chain" id="PRO_1000212329" description="Nucleotide-binding protein Avin_13410">
    <location>
        <begin position="1"/>
        <end position="159"/>
    </location>
</feature>
<evidence type="ECO:0000255" key="1">
    <source>
        <dbReference type="HAMAP-Rule" id="MF_00632"/>
    </source>
</evidence>
<comment type="function">
    <text evidence="1">Nucleotide-binding protein.</text>
</comment>
<comment type="similarity">
    <text evidence="1">Belongs to the YajQ family.</text>
</comment>
<sequence length="159" mass="18141">MPSFDVVSELDKHEVTNAVDNAIKELDRRYDLRGKGSFEFKDKTLTLTAEADFMLEQMIEILKLALIKRKVDIQCLEYKDSYASGKVVKQEVILREGIDKDLAKKIVALIKDSKLKVQAAIQGEQVRITGKKRDDLQEAIALLRGQELGMPLQFNNFRD</sequence>
<accession>C1DQB5</accession>
<proteinExistence type="inferred from homology"/>
<dbReference type="EMBL" id="CP001157">
    <property type="protein sequence ID" value="ACO77567.1"/>
    <property type="molecule type" value="Genomic_DNA"/>
</dbReference>
<dbReference type="RefSeq" id="WP_012699987.1">
    <property type="nucleotide sequence ID" value="NC_012560.1"/>
</dbReference>
<dbReference type="SMR" id="C1DQB5"/>
<dbReference type="STRING" id="322710.Avin_13410"/>
<dbReference type="EnsemblBacteria" id="ACO77567">
    <property type="protein sequence ID" value="ACO77567"/>
    <property type="gene ID" value="Avin_13410"/>
</dbReference>
<dbReference type="GeneID" id="88184656"/>
<dbReference type="KEGG" id="avn:Avin_13410"/>
<dbReference type="eggNOG" id="COG1666">
    <property type="taxonomic scope" value="Bacteria"/>
</dbReference>
<dbReference type="HOGENOM" id="CLU_099839_1_0_6"/>
<dbReference type="OrthoDB" id="9801447at2"/>
<dbReference type="Proteomes" id="UP000002424">
    <property type="component" value="Chromosome"/>
</dbReference>
<dbReference type="GO" id="GO:0005829">
    <property type="term" value="C:cytosol"/>
    <property type="evidence" value="ECO:0007669"/>
    <property type="project" value="TreeGrafter"/>
</dbReference>
<dbReference type="GO" id="GO:0000166">
    <property type="term" value="F:nucleotide binding"/>
    <property type="evidence" value="ECO:0007669"/>
    <property type="project" value="TreeGrafter"/>
</dbReference>
<dbReference type="CDD" id="cd11740">
    <property type="entry name" value="YajQ_like"/>
    <property type="match status" value="1"/>
</dbReference>
<dbReference type="FunFam" id="3.30.70.860:FF:000001">
    <property type="entry name" value="UPF0234 protein YajQ"/>
    <property type="match status" value="1"/>
</dbReference>
<dbReference type="Gene3D" id="3.30.70.860">
    <property type="match status" value="1"/>
</dbReference>
<dbReference type="Gene3D" id="3.30.70.990">
    <property type="entry name" value="YajQ-like, domain 2"/>
    <property type="match status" value="1"/>
</dbReference>
<dbReference type="HAMAP" id="MF_00632">
    <property type="entry name" value="YajQ"/>
    <property type="match status" value="1"/>
</dbReference>
<dbReference type="InterPro" id="IPR007551">
    <property type="entry name" value="DUF520"/>
</dbReference>
<dbReference type="InterPro" id="IPR035571">
    <property type="entry name" value="UPF0234-like_C"/>
</dbReference>
<dbReference type="InterPro" id="IPR035570">
    <property type="entry name" value="UPF0234_N"/>
</dbReference>
<dbReference type="InterPro" id="IPR036183">
    <property type="entry name" value="YajQ-like_sf"/>
</dbReference>
<dbReference type="NCBIfam" id="NF003819">
    <property type="entry name" value="PRK05412.1"/>
    <property type="match status" value="1"/>
</dbReference>
<dbReference type="PANTHER" id="PTHR30476">
    <property type="entry name" value="UPF0234 PROTEIN YAJQ"/>
    <property type="match status" value="1"/>
</dbReference>
<dbReference type="PANTHER" id="PTHR30476:SF0">
    <property type="entry name" value="UPF0234 PROTEIN YAJQ"/>
    <property type="match status" value="1"/>
</dbReference>
<dbReference type="Pfam" id="PF04461">
    <property type="entry name" value="DUF520"/>
    <property type="match status" value="1"/>
</dbReference>
<dbReference type="SUPFAM" id="SSF89963">
    <property type="entry name" value="YajQ-like"/>
    <property type="match status" value="2"/>
</dbReference>
<keyword id="KW-0547">Nucleotide-binding</keyword>
<protein>
    <recommendedName>
        <fullName evidence="1">Nucleotide-binding protein Avin_13410</fullName>
    </recommendedName>
</protein>